<proteinExistence type="inferred from homology"/>
<feature type="chain" id="PRO_0000333167" description="Membrane-associated protein TcaA">
    <location>
        <begin position="1"/>
        <end position="460"/>
    </location>
</feature>
<feature type="topological domain" description="Cytoplasmic" evidence="2">
    <location>
        <begin position="1"/>
        <end position="49"/>
    </location>
</feature>
<feature type="transmembrane region" description="Helical" evidence="2">
    <location>
        <begin position="50"/>
        <end position="70"/>
    </location>
</feature>
<feature type="topological domain" description="Extracellular" evidence="2">
    <location>
        <begin position="71"/>
        <end position="460"/>
    </location>
</feature>
<feature type="zinc finger region" description="C4-type" evidence="2">
    <location>
        <begin position="4"/>
        <end position="21"/>
    </location>
</feature>
<comment type="function">
    <text evidence="1">Plays a major role in decreasing resistance to glycopeptide antibiotics.</text>
</comment>
<comment type="subcellular location">
    <subcellularLocation>
        <location evidence="1">Cell membrane</location>
        <topology evidence="1">Single-pass membrane protein</topology>
    </subcellularLocation>
</comment>
<comment type="similarity">
    <text evidence="3">Belongs to the TcaA family.</text>
</comment>
<keyword id="KW-0046">Antibiotic resistance</keyword>
<keyword id="KW-1003">Cell membrane</keyword>
<keyword id="KW-0472">Membrane</keyword>
<keyword id="KW-0479">Metal-binding</keyword>
<keyword id="KW-0812">Transmembrane</keyword>
<keyword id="KW-1133">Transmembrane helix</keyword>
<keyword id="KW-0862">Zinc</keyword>
<keyword id="KW-0863">Zinc-finger</keyword>
<protein>
    <recommendedName>
        <fullName>Membrane-associated protein TcaA</fullName>
    </recommendedName>
</protein>
<sequence>MKSCSKCGQQAQDDVQICTQCGHKFDSRQALYRKSTDEDIQTNNIKMRKMVPWAIGFFILILIIILFFLLRNFNSPEAQTKILVNAIENNDKQKVATLLSTKDNKVDSEEAKVYINYIKDEVGLKQFVSDLKNTVHKLNKSKTSVASYIQTRSGQNILRVSKNGTRYIFFDNMSFTAPTKQPIVKPKEKTKYEFKSGGKKKTVIAEANKVTPIGNFIPGTYRIPAMKSTENGDFAGYLKFDFRQSNSETVDVTEDFEEANITVTLKGDTKLNDSSKKVTINDREMAFSSSKTYGPYPQNKDITISASGKAKDKTFTTQTKTIKASDLKYNTEITLNFDSEDIEDYVEKKEKEENSLKNKLIEFFAGYSLANNAAFNQSDFDFVSSYIKKGSSFYDDVKKRVSKGSLMMISSPQIIDAEKHGDKITATVRLINENGKQVDKEYELEQGSQDRLQLIKTSEK</sequence>
<name>TCAA_STAAW</name>
<accession>Q8NV48</accession>
<dbReference type="EMBL" id="BA000033">
    <property type="protein sequence ID" value="BAB96142.1"/>
    <property type="molecule type" value="Genomic_DNA"/>
</dbReference>
<dbReference type="RefSeq" id="WP_000833821.1">
    <property type="nucleotide sequence ID" value="NC_003923.1"/>
</dbReference>
<dbReference type="SMR" id="Q8NV48"/>
<dbReference type="KEGG" id="sam:MW2277"/>
<dbReference type="HOGENOM" id="CLU_047245_0_0_9"/>
<dbReference type="GO" id="GO:0005886">
    <property type="term" value="C:plasma membrane"/>
    <property type="evidence" value="ECO:0007669"/>
    <property type="project" value="UniProtKB-SubCell"/>
</dbReference>
<dbReference type="GO" id="GO:0008270">
    <property type="term" value="F:zinc ion binding"/>
    <property type="evidence" value="ECO:0007669"/>
    <property type="project" value="UniProtKB-KW"/>
</dbReference>
<dbReference type="GO" id="GO:0046677">
    <property type="term" value="P:response to antibiotic"/>
    <property type="evidence" value="ECO:0007669"/>
    <property type="project" value="UniProtKB-KW"/>
</dbReference>
<dbReference type="InterPro" id="IPR023599">
    <property type="entry name" value="Mem_prot_TcaA"/>
</dbReference>
<dbReference type="InterPro" id="IPR054529">
    <property type="entry name" value="TcaA_2nd"/>
</dbReference>
<dbReference type="InterPro" id="IPR054530">
    <property type="entry name" value="TcaA_4th"/>
</dbReference>
<dbReference type="PANTHER" id="PTHR40038">
    <property type="entry name" value="MEMBRANE-ASSOCIATED PROTEIN TCAA"/>
    <property type="match status" value="1"/>
</dbReference>
<dbReference type="PANTHER" id="PTHR40038:SF1">
    <property type="entry name" value="MEMBRANE-ASSOCIATED PROTEIN TCAA"/>
    <property type="match status" value="1"/>
</dbReference>
<dbReference type="Pfam" id="PF22813">
    <property type="entry name" value="TcaA_2nd"/>
    <property type="match status" value="1"/>
</dbReference>
<dbReference type="Pfam" id="PF22820">
    <property type="entry name" value="TcaA_3rd_4th"/>
    <property type="match status" value="1"/>
</dbReference>
<dbReference type="Pfam" id="PF22819">
    <property type="entry name" value="TcaA_5th"/>
    <property type="match status" value="1"/>
</dbReference>
<dbReference type="PIRSF" id="PIRSF032522">
    <property type="entry name" value="TcaA"/>
    <property type="match status" value="1"/>
</dbReference>
<evidence type="ECO:0000250" key="1"/>
<evidence type="ECO:0000255" key="2"/>
<evidence type="ECO:0000305" key="3"/>
<gene>
    <name type="primary">tcaA</name>
    <name type="ordered locus">MW2277</name>
</gene>
<reference key="1">
    <citation type="journal article" date="2002" name="Lancet">
        <title>Genome and virulence determinants of high virulence community-acquired MRSA.</title>
        <authorList>
            <person name="Baba T."/>
            <person name="Takeuchi F."/>
            <person name="Kuroda M."/>
            <person name="Yuzawa H."/>
            <person name="Aoki K."/>
            <person name="Oguchi A."/>
            <person name="Nagai Y."/>
            <person name="Iwama N."/>
            <person name="Asano K."/>
            <person name="Naimi T."/>
            <person name="Kuroda H."/>
            <person name="Cui L."/>
            <person name="Yamamoto K."/>
            <person name="Hiramatsu K."/>
        </authorList>
    </citation>
    <scope>NUCLEOTIDE SEQUENCE [LARGE SCALE GENOMIC DNA]</scope>
    <source>
        <strain>MW2</strain>
    </source>
</reference>
<organism>
    <name type="scientific">Staphylococcus aureus (strain MW2)</name>
    <dbReference type="NCBI Taxonomy" id="196620"/>
    <lineage>
        <taxon>Bacteria</taxon>
        <taxon>Bacillati</taxon>
        <taxon>Bacillota</taxon>
        <taxon>Bacilli</taxon>
        <taxon>Bacillales</taxon>
        <taxon>Staphylococcaceae</taxon>
        <taxon>Staphylococcus</taxon>
    </lineage>
</organism>